<dbReference type="EMBL" id="FM177140">
    <property type="protein sequence ID" value="CAQ66913.1"/>
    <property type="molecule type" value="Genomic_DNA"/>
</dbReference>
<dbReference type="SMR" id="B3WEW2"/>
<dbReference type="KEGG" id="lcb:LCABL_18330"/>
<dbReference type="HOGENOM" id="CLU_064548_7_1_9"/>
<dbReference type="GO" id="GO:1990904">
    <property type="term" value="C:ribonucleoprotein complex"/>
    <property type="evidence" value="ECO:0007669"/>
    <property type="project" value="UniProtKB-KW"/>
</dbReference>
<dbReference type="GO" id="GO:0005840">
    <property type="term" value="C:ribosome"/>
    <property type="evidence" value="ECO:0007669"/>
    <property type="project" value="UniProtKB-KW"/>
</dbReference>
<dbReference type="GO" id="GO:0003735">
    <property type="term" value="F:structural constituent of ribosome"/>
    <property type="evidence" value="ECO:0007669"/>
    <property type="project" value="InterPro"/>
</dbReference>
<dbReference type="GO" id="GO:0006412">
    <property type="term" value="P:translation"/>
    <property type="evidence" value="ECO:0007669"/>
    <property type="project" value="UniProtKB-UniRule"/>
</dbReference>
<dbReference type="Gene3D" id="2.30.170.40">
    <property type="entry name" value="Ribosomal protein L28/L24"/>
    <property type="match status" value="1"/>
</dbReference>
<dbReference type="HAMAP" id="MF_00373">
    <property type="entry name" value="Ribosomal_bL28"/>
    <property type="match status" value="1"/>
</dbReference>
<dbReference type="InterPro" id="IPR050096">
    <property type="entry name" value="Bacterial_rp_bL28"/>
</dbReference>
<dbReference type="InterPro" id="IPR026569">
    <property type="entry name" value="Ribosomal_bL28"/>
</dbReference>
<dbReference type="InterPro" id="IPR034704">
    <property type="entry name" value="Ribosomal_bL28/bL31-like_sf"/>
</dbReference>
<dbReference type="InterPro" id="IPR001383">
    <property type="entry name" value="Ribosomal_bL28_bact-type"/>
</dbReference>
<dbReference type="InterPro" id="IPR037147">
    <property type="entry name" value="Ribosomal_bL28_sf"/>
</dbReference>
<dbReference type="NCBIfam" id="TIGR00009">
    <property type="entry name" value="L28"/>
    <property type="match status" value="1"/>
</dbReference>
<dbReference type="PANTHER" id="PTHR39080">
    <property type="entry name" value="50S RIBOSOMAL PROTEIN L28"/>
    <property type="match status" value="1"/>
</dbReference>
<dbReference type="PANTHER" id="PTHR39080:SF1">
    <property type="entry name" value="LARGE RIBOSOMAL SUBUNIT PROTEIN BL28A"/>
    <property type="match status" value="1"/>
</dbReference>
<dbReference type="Pfam" id="PF00830">
    <property type="entry name" value="Ribosomal_L28"/>
    <property type="match status" value="1"/>
</dbReference>
<dbReference type="SUPFAM" id="SSF143800">
    <property type="entry name" value="L28p-like"/>
    <property type="match status" value="1"/>
</dbReference>
<protein>
    <recommendedName>
        <fullName evidence="1">Large ribosomal subunit protein bL28</fullName>
    </recommendedName>
    <alternativeName>
        <fullName evidence="2">50S ribosomal protein L28</fullName>
    </alternativeName>
</protein>
<sequence>MAKDIITGRHTTFGNKRSHALNSSRRQWKANLHKVRILVDGKPKRVWVSARALKSGKLTRV</sequence>
<reference key="1">
    <citation type="submission" date="2008-06" db="EMBL/GenBank/DDBJ databases">
        <title>Lactobacillus casei BL23 complete genome sequence.</title>
        <authorList>
            <person name="Maze A."/>
            <person name="Boel G."/>
            <person name="Bourand A."/>
            <person name="Loux V."/>
            <person name="Gibrat J.F."/>
            <person name="Zuniga M."/>
            <person name="Hartke A."/>
            <person name="Deutscher J."/>
        </authorList>
    </citation>
    <scope>NUCLEOTIDE SEQUENCE [LARGE SCALE GENOMIC DNA]</scope>
    <source>
        <strain>BL23</strain>
    </source>
</reference>
<keyword id="KW-0687">Ribonucleoprotein</keyword>
<keyword id="KW-0689">Ribosomal protein</keyword>
<proteinExistence type="inferred from homology"/>
<evidence type="ECO:0000255" key="1">
    <source>
        <dbReference type="HAMAP-Rule" id="MF_00373"/>
    </source>
</evidence>
<evidence type="ECO:0000305" key="2"/>
<organism>
    <name type="scientific">Lacticaseibacillus casei (strain BL23)</name>
    <name type="common">Lactobacillus casei</name>
    <dbReference type="NCBI Taxonomy" id="543734"/>
    <lineage>
        <taxon>Bacteria</taxon>
        <taxon>Bacillati</taxon>
        <taxon>Bacillota</taxon>
        <taxon>Bacilli</taxon>
        <taxon>Lactobacillales</taxon>
        <taxon>Lactobacillaceae</taxon>
        <taxon>Lacticaseibacillus</taxon>
    </lineage>
</organism>
<comment type="similarity">
    <text evidence="1">Belongs to the bacterial ribosomal protein bL28 family.</text>
</comment>
<name>RL28_LACCB</name>
<gene>
    <name evidence="1" type="primary">rpmB</name>
    <name type="ordered locus">LCABL_18330</name>
</gene>
<feature type="chain" id="PRO_1000121648" description="Large ribosomal subunit protein bL28">
    <location>
        <begin position="1"/>
        <end position="61"/>
    </location>
</feature>
<accession>B3WEW2</accession>